<proteinExistence type="evidence at transcript level"/>
<gene>
    <name type="primary">fus1</name>
    <name type="ORF">SPAC20G4.02c</name>
</gene>
<reference key="1">
    <citation type="journal article" date="1995" name="Mol. Cell. Biol.">
        <title>Characterization of fus1 of Schizosaccharomyces pombe: a developmentally controlled function needed for conjugation.</title>
        <authorList>
            <person name="Petersen J."/>
            <person name="Weilguny D."/>
            <person name="Egel R."/>
            <person name="Nielsen O."/>
        </authorList>
    </citation>
    <scope>NUCLEOTIDE SEQUENCE [GENOMIC DNA]</scope>
    <source>
        <strain>EG355</strain>
    </source>
</reference>
<reference key="2">
    <citation type="journal article" date="2002" name="Nature">
        <title>The genome sequence of Schizosaccharomyces pombe.</title>
        <authorList>
            <person name="Wood V."/>
            <person name="Gwilliam R."/>
            <person name="Rajandream M.A."/>
            <person name="Lyne M.H."/>
            <person name="Lyne R."/>
            <person name="Stewart A."/>
            <person name="Sgouros J.G."/>
            <person name="Peat N."/>
            <person name="Hayles J."/>
            <person name="Baker S.G."/>
            <person name="Basham D."/>
            <person name="Bowman S."/>
            <person name="Brooks K."/>
            <person name="Brown D."/>
            <person name="Brown S."/>
            <person name="Chillingworth T."/>
            <person name="Churcher C.M."/>
            <person name="Collins M."/>
            <person name="Connor R."/>
            <person name="Cronin A."/>
            <person name="Davis P."/>
            <person name="Feltwell T."/>
            <person name="Fraser A."/>
            <person name="Gentles S."/>
            <person name="Goble A."/>
            <person name="Hamlin N."/>
            <person name="Harris D.E."/>
            <person name="Hidalgo J."/>
            <person name="Hodgson G."/>
            <person name="Holroyd S."/>
            <person name="Hornsby T."/>
            <person name="Howarth S."/>
            <person name="Huckle E.J."/>
            <person name="Hunt S."/>
            <person name="Jagels K."/>
            <person name="James K.D."/>
            <person name="Jones L."/>
            <person name="Jones M."/>
            <person name="Leather S."/>
            <person name="McDonald S."/>
            <person name="McLean J."/>
            <person name="Mooney P."/>
            <person name="Moule S."/>
            <person name="Mungall K.L."/>
            <person name="Murphy L.D."/>
            <person name="Niblett D."/>
            <person name="Odell C."/>
            <person name="Oliver K."/>
            <person name="O'Neil S."/>
            <person name="Pearson D."/>
            <person name="Quail M.A."/>
            <person name="Rabbinowitsch E."/>
            <person name="Rutherford K.M."/>
            <person name="Rutter S."/>
            <person name="Saunders D."/>
            <person name="Seeger K."/>
            <person name="Sharp S."/>
            <person name="Skelton J."/>
            <person name="Simmonds M.N."/>
            <person name="Squares R."/>
            <person name="Squares S."/>
            <person name="Stevens K."/>
            <person name="Taylor K."/>
            <person name="Taylor R.G."/>
            <person name="Tivey A."/>
            <person name="Walsh S.V."/>
            <person name="Warren T."/>
            <person name="Whitehead S."/>
            <person name="Woodward J.R."/>
            <person name="Volckaert G."/>
            <person name="Aert R."/>
            <person name="Robben J."/>
            <person name="Grymonprez B."/>
            <person name="Weltjens I."/>
            <person name="Vanstreels E."/>
            <person name="Rieger M."/>
            <person name="Schaefer M."/>
            <person name="Mueller-Auer S."/>
            <person name="Gabel C."/>
            <person name="Fuchs M."/>
            <person name="Duesterhoeft A."/>
            <person name="Fritzc C."/>
            <person name="Holzer E."/>
            <person name="Moestl D."/>
            <person name="Hilbert H."/>
            <person name="Borzym K."/>
            <person name="Langer I."/>
            <person name="Beck A."/>
            <person name="Lehrach H."/>
            <person name="Reinhardt R."/>
            <person name="Pohl T.M."/>
            <person name="Eger P."/>
            <person name="Zimmermann W."/>
            <person name="Wedler H."/>
            <person name="Wambutt R."/>
            <person name="Purnelle B."/>
            <person name="Goffeau A."/>
            <person name="Cadieu E."/>
            <person name="Dreano S."/>
            <person name="Gloux S."/>
            <person name="Lelaure V."/>
            <person name="Mottier S."/>
            <person name="Galibert F."/>
            <person name="Aves S.J."/>
            <person name="Xiang Z."/>
            <person name="Hunt C."/>
            <person name="Moore K."/>
            <person name="Hurst S.M."/>
            <person name="Lucas M."/>
            <person name="Rochet M."/>
            <person name="Gaillardin C."/>
            <person name="Tallada V.A."/>
            <person name="Garzon A."/>
            <person name="Thode G."/>
            <person name="Daga R.R."/>
            <person name="Cruzado L."/>
            <person name="Jimenez J."/>
            <person name="Sanchez M."/>
            <person name="del Rey F."/>
            <person name="Benito J."/>
            <person name="Dominguez A."/>
            <person name="Revuelta J.L."/>
            <person name="Moreno S."/>
            <person name="Armstrong J."/>
            <person name="Forsburg S.L."/>
            <person name="Cerutti L."/>
            <person name="Lowe T."/>
            <person name="McCombie W.R."/>
            <person name="Paulsen I."/>
            <person name="Potashkin J."/>
            <person name="Shpakovski G.V."/>
            <person name="Ussery D."/>
            <person name="Barrell B.G."/>
            <person name="Nurse P."/>
        </authorList>
    </citation>
    <scope>NUCLEOTIDE SEQUENCE [LARGE SCALE GENOMIC DNA]</scope>
    <source>
        <strain>972 / ATCC 24843</strain>
    </source>
</reference>
<comment type="function">
    <text>Required for cell fusion. It associates with the pre-zygotic projection tips in conjugating cells.</text>
</comment>
<comment type="subunit">
    <text evidence="1">Interacts with actin at the FH2 domain.</text>
</comment>
<comment type="subcellular location">
    <subcellularLocation>
        <location>Cytoplasm</location>
    </subcellularLocation>
</comment>
<comment type="induction">
    <text>By nitrogen starvation and by a pheromone signal in both P and M cell types. Essentially unexpressed in vegetative cells.</text>
</comment>
<comment type="similarity">
    <text evidence="4">Belongs to the formin homology family. BNI1 subfamily.</text>
</comment>
<name>FUS1_SCHPO</name>
<organism>
    <name type="scientific">Schizosaccharomyces pombe (strain 972 / ATCC 24843)</name>
    <name type="common">Fission yeast</name>
    <dbReference type="NCBI Taxonomy" id="284812"/>
    <lineage>
        <taxon>Eukaryota</taxon>
        <taxon>Fungi</taxon>
        <taxon>Dikarya</taxon>
        <taxon>Ascomycota</taxon>
        <taxon>Taphrinomycotina</taxon>
        <taxon>Schizosaccharomycetes</taxon>
        <taxon>Schizosaccharomycetales</taxon>
        <taxon>Schizosaccharomycetaceae</taxon>
        <taxon>Schizosaccharomyces</taxon>
    </lineage>
</organism>
<sequence>MMTASFKGIRISKPIVKEISSFGSLTNIDLHTDPYEKVEAKALSRSRLKNQSVKKTDLRITNDYSSLFVSIENKKNTIPDIHCNNLSKRPVGFTDSYVPGEALLCPDDPNLVNELFDDVLKRLREEKSDSGEQFHWDANVTLSQENKWSFITGYLSRNDKFLKISSNDSELNVKASVISYIEKLSCTPLKLKYVESLAVALRTESVTWVRYFLLMGGHIVLAKILQAIHEKKHLKSPDITLEIAILKSMRCIIGQKIGTDFYLSNKYPIDSVVHCLLSTKLLVRKLAAELLTFLCYSEKPNGINAIMKCMKNFANLKVESMNVFDLWLSQWKRTLLEKVVTEEKKVLEEAALHDKITIEYIISQMLLINAFLENIPSKTALLQFKESLRIGNFKSILLILKKINDEGVLKQLEKCVKLVSLDTANEKHFLKHTPNSAAHQSLLNTNMFNDANFEFMVKEHIKNFLKLLKEHNNPVRIIKLLDCLVLTLQADKGNGNSNNDIDCFYKELKIGNEQGNNAPGYSSVTSGYGTTNSKKVVASYDNTDDNEYSVSKSELYATGDTNNTTNQGYENSERKYVESSKYETDLKNIFDCLCLLFPSEFDPQSSFSAEKIFSKLKHLLTRTRDSYISEDTKILRLLNRSSSKLQDRDQEYLISKNNVNGNGNRDWVQPVNTTSSVSAFASPRIKPKLLFQPNQDEKLKLCKLDLAKANSITLKSEPSSAVSTHSFEVHLSMPGTQIKSANLAEKMETSKHKVFNPKRIDVVSDLPLDYRKSYYGRFSITDTKRFSKIENMRIKEVIDGNPFKAPPPAPLPPPAPPLPTAMSSLQKFEKNDSQIFRKTIIIPENISIDDIFKFCSGSESEVYASKIPGELCNPSKRLKQLHWKRLEVPFEKTLWNIVVADPYLLTLKLTAEGIFKQLEDCYPLREVTVSNKKVKEYTGFMPVDLQQMVSIRLHRFNSLTPIEIAKKFFHCDHDIMELVDFFNDRKFFRQEGLKKQLKPYMSSRNEEVMEVSEKLLELSRFDQIYTLIVVDIDTYYEKRMAALKIKSFLANNFRDFRRQIRKLHCASLELKSSLHFKYFLNLVLHIGNFMNDAPRRAKGYRLESLLRASMIKNDKTGLTLLHTIEKIVRTHFPQLEAFLVDLKAIPEISRFNLEQLEQDCNDICERMKNVEKDFSNEGIFSNHKALHPDDHICEVMVPWIPSGKSMVDELNSDITELKTTLKTTLLMYGENPDEPTSSARFFNNLNEIILEYKKASTVNQKMEKEEELAFLRLQALKASVKSNNAENSGSSKNEEVSATMENLISQLQKGLCDDSLSNKTDCTESSKQTIETLMNYENDKQTLEGSNKKRQTVVLKAECMLKQLENNNELKR</sequence>
<evidence type="ECO:0000250" key="1"/>
<evidence type="ECO:0000255" key="2">
    <source>
        <dbReference type="PROSITE-ProRule" id="PRU00579"/>
    </source>
</evidence>
<evidence type="ECO:0000255" key="3">
    <source>
        <dbReference type="PROSITE-ProRule" id="PRU00774"/>
    </source>
</evidence>
<evidence type="ECO:0000305" key="4"/>
<accession>Q10719</accession>
<keyword id="KW-0963">Cytoplasm</keyword>
<keyword id="KW-1185">Reference proteome</keyword>
<keyword id="KW-0729">SH3-binding</keyword>
<keyword id="KW-0346">Stress response</keyword>
<feature type="chain" id="PRO_0000194902" description="Cell fusion protein fus1">
    <location>
        <begin position="1"/>
        <end position="1372"/>
    </location>
</feature>
<feature type="domain" description="GBD/FH3" evidence="2">
    <location>
        <begin position="104"/>
        <end position="522"/>
    </location>
</feature>
<feature type="domain" description="FH2" evidence="3">
    <location>
        <begin position="868"/>
        <end position="1278"/>
    </location>
</feature>
<feature type="short sequence motif" description="SH3-binding">
    <location>
        <begin position="802"/>
        <end position="817"/>
    </location>
</feature>
<dbReference type="EMBL" id="L37838">
    <property type="protein sequence ID" value="AAA99003.1"/>
    <property type="molecule type" value="Genomic_DNA"/>
</dbReference>
<dbReference type="EMBL" id="CU329670">
    <property type="protein sequence ID" value="CAB11252.1"/>
    <property type="molecule type" value="Genomic_DNA"/>
</dbReference>
<dbReference type="PIR" id="T43296">
    <property type="entry name" value="T43296"/>
</dbReference>
<dbReference type="RefSeq" id="NP_594737.1">
    <property type="nucleotide sequence ID" value="NM_001020165.2"/>
</dbReference>
<dbReference type="SMR" id="Q10719"/>
<dbReference type="BioGRID" id="278235">
    <property type="interactions" value="43"/>
</dbReference>
<dbReference type="FunCoup" id="Q10719">
    <property type="interactions" value="60"/>
</dbReference>
<dbReference type="STRING" id="284812.Q10719"/>
<dbReference type="iPTMnet" id="Q10719"/>
<dbReference type="PaxDb" id="4896-SPAC20G4.02c.1"/>
<dbReference type="EnsemblFungi" id="SPAC20G4.02c.1">
    <property type="protein sequence ID" value="SPAC20G4.02c.1:pep"/>
    <property type="gene ID" value="SPAC20G4.02c"/>
</dbReference>
<dbReference type="GeneID" id="2541741"/>
<dbReference type="KEGG" id="spo:2541741"/>
<dbReference type="PomBase" id="SPAC20G4.02c">
    <property type="gene designation" value="fus1"/>
</dbReference>
<dbReference type="VEuPathDB" id="FungiDB:SPAC20G4.02c"/>
<dbReference type="eggNOG" id="KOG1922">
    <property type="taxonomic scope" value="Eukaryota"/>
</dbReference>
<dbReference type="HOGENOM" id="CLU_001313_1_0_1"/>
<dbReference type="InParanoid" id="Q10719"/>
<dbReference type="OMA" id="IRNDCFI"/>
<dbReference type="PhylomeDB" id="Q10719"/>
<dbReference type="PRO" id="PR:Q10719"/>
<dbReference type="Proteomes" id="UP000002485">
    <property type="component" value="Chromosome I"/>
</dbReference>
<dbReference type="GO" id="GO:0032153">
    <property type="term" value="C:cell division site"/>
    <property type="evidence" value="ECO:0007005"/>
    <property type="project" value="PomBase"/>
</dbReference>
<dbReference type="GO" id="GO:0005737">
    <property type="term" value="C:cytoplasm"/>
    <property type="evidence" value="ECO:0007005"/>
    <property type="project" value="PomBase"/>
</dbReference>
<dbReference type="GO" id="GO:0005829">
    <property type="term" value="C:cytosol"/>
    <property type="evidence" value="ECO:0007005"/>
    <property type="project" value="PomBase"/>
</dbReference>
<dbReference type="GO" id="GO:0005937">
    <property type="term" value="C:mating projection"/>
    <property type="evidence" value="ECO:0000314"/>
    <property type="project" value="PomBase"/>
</dbReference>
<dbReference type="GO" id="GO:1990819">
    <property type="term" value="C:mating projection actin fusion focus"/>
    <property type="evidence" value="ECO:0000314"/>
    <property type="project" value="PomBase"/>
</dbReference>
<dbReference type="GO" id="GO:0043332">
    <property type="term" value="C:mating projection tip"/>
    <property type="evidence" value="ECO:0000314"/>
    <property type="project" value="PomBase"/>
</dbReference>
<dbReference type="GO" id="GO:0110085">
    <property type="term" value="C:mitotic actomyosin contractile ring"/>
    <property type="evidence" value="ECO:0000318"/>
    <property type="project" value="GO_Central"/>
</dbReference>
<dbReference type="GO" id="GO:0051015">
    <property type="term" value="F:actin filament binding"/>
    <property type="evidence" value="ECO:0000318"/>
    <property type="project" value="GO_Central"/>
</dbReference>
<dbReference type="GO" id="GO:0017124">
    <property type="term" value="F:SH3 domain binding"/>
    <property type="evidence" value="ECO:0007669"/>
    <property type="project" value="UniProtKB-KW"/>
</dbReference>
<dbReference type="GO" id="GO:0031267">
    <property type="term" value="F:small GTPase binding"/>
    <property type="evidence" value="ECO:0007669"/>
    <property type="project" value="InterPro"/>
</dbReference>
<dbReference type="GO" id="GO:0000755">
    <property type="term" value="P:cytogamy"/>
    <property type="evidence" value="ECO:0000315"/>
    <property type="project" value="PomBase"/>
</dbReference>
<dbReference type="GO" id="GO:1904600">
    <property type="term" value="P:mating projection actin fusion focus assembly"/>
    <property type="evidence" value="ECO:0000315"/>
    <property type="project" value="PomBase"/>
</dbReference>
<dbReference type="FunFam" id="1.25.10.10:FF:000997">
    <property type="entry name" value="Cell fusion protein fus1"/>
    <property type="match status" value="1"/>
</dbReference>
<dbReference type="Gene3D" id="6.10.30.50">
    <property type="match status" value="1"/>
</dbReference>
<dbReference type="Gene3D" id="1.20.58.2220">
    <property type="entry name" value="Formin, FH2 domain"/>
    <property type="match status" value="1"/>
</dbReference>
<dbReference type="Gene3D" id="1.25.10.10">
    <property type="entry name" value="Leucine-rich Repeat Variant"/>
    <property type="match status" value="1"/>
</dbReference>
<dbReference type="InterPro" id="IPR051661">
    <property type="entry name" value="Actin_filament_regulator"/>
</dbReference>
<dbReference type="InterPro" id="IPR011989">
    <property type="entry name" value="ARM-like"/>
</dbReference>
<dbReference type="InterPro" id="IPR016024">
    <property type="entry name" value="ARM-type_fold"/>
</dbReference>
<dbReference type="InterPro" id="IPR015425">
    <property type="entry name" value="FH2_Formin"/>
</dbReference>
<dbReference type="InterPro" id="IPR042201">
    <property type="entry name" value="FH2_Formin_sf"/>
</dbReference>
<dbReference type="InterPro" id="IPR014768">
    <property type="entry name" value="GBD/FH3_dom"/>
</dbReference>
<dbReference type="InterPro" id="IPR010473">
    <property type="entry name" value="GTPase-bd"/>
</dbReference>
<dbReference type="PANTHER" id="PTHR47102">
    <property type="entry name" value="PROTEIN BNI1"/>
    <property type="match status" value="1"/>
</dbReference>
<dbReference type="PANTHER" id="PTHR47102:SF2">
    <property type="entry name" value="PROTEIN BNI1"/>
    <property type="match status" value="1"/>
</dbReference>
<dbReference type="Pfam" id="PF06371">
    <property type="entry name" value="Drf_GBD"/>
    <property type="match status" value="1"/>
</dbReference>
<dbReference type="Pfam" id="PF02181">
    <property type="entry name" value="FH2"/>
    <property type="match status" value="1"/>
</dbReference>
<dbReference type="SMART" id="SM01140">
    <property type="entry name" value="Drf_GBD"/>
    <property type="match status" value="1"/>
</dbReference>
<dbReference type="SMART" id="SM00498">
    <property type="entry name" value="FH2"/>
    <property type="match status" value="1"/>
</dbReference>
<dbReference type="SUPFAM" id="SSF48371">
    <property type="entry name" value="ARM repeat"/>
    <property type="match status" value="1"/>
</dbReference>
<dbReference type="SUPFAM" id="SSF101447">
    <property type="entry name" value="Formin homology 2 domain (FH2 domain)"/>
    <property type="match status" value="1"/>
</dbReference>
<dbReference type="PROSITE" id="PS51444">
    <property type="entry name" value="FH2"/>
    <property type="match status" value="1"/>
</dbReference>
<dbReference type="PROSITE" id="PS51232">
    <property type="entry name" value="GBD_FH3"/>
    <property type="match status" value="1"/>
</dbReference>
<protein>
    <recommendedName>
        <fullName>Cell fusion protein fus1</fullName>
    </recommendedName>
</protein>